<comment type="function">
    <text evidence="1">Hydrolyzes N-terminal residues in D-amino acid-containing peptides.</text>
</comment>
<comment type="catalytic activity">
    <reaction evidence="1">
        <text>Release of an N-terminal D-amino acid from a peptide, Xaa-|-Yaa-, in which Xaa is preferably D-Ala, D-Ser or D-Thr. D-amino acid amides and methyl esters also are hydrolyzed, as is glycine amide.</text>
        <dbReference type="EC" id="3.4.11.19"/>
    </reaction>
</comment>
<comment type="activity regulation">
    <text evidence="1">Inhibited by beta-lactam compounds such as 6-aminopenicillic acid, 7-aminocephalosporanic acid, benzylpenicillin and ampicillin. Inhibited by p-chloromercuribenzoate.</text>
</comment>
<comment type="subunit">
    <text evidence="1">Homodimer.</text>
</comment>
<comment type="similarity">
    <text evidence="1">Belongs to the peptidase S12 family.</text>
</comment>
<sequence>MPNIDLPTLEAFVHAIPQNYKGPGGAVAVVRNGEIVLRHAWGFADLAARKAMTPETRMPICSVSKQFTCAVLLDCIGEPEMLDSALAAYLDQFGDGRPAVRDLCNNQSGLRDYWALTVLCGAAPEGIFLPDQAQNLLRRLKTTHFAPGTHYSYCNGNFRILADLIEQHTGRSLADLLAERIFAPAAMKTAELIPDTALFNECTGYEGDTVHGFLPAINRIHWLGDAGICASLDDMIAWEQFIDRTRHDENGLYRRLSSPQTFADGAPAPYGFGLKFEETGGKRLTGHGGALRGWRCQRWHCADERISTIVMFNFEGNASDAALKMMNAALGIPPAKPVRAQANPGWFGSWLNPETGLVLSLEDAGGGRMKARFGTGPEIMDISGENEAQSSMTTLRRDGDMIHLARKDENLHLAMHRLKGEARQDIAGRYRSDELEADLLLVSEGGAIYGAFEGFLGKSDMYPLYAAGPDVWLLPVQRSMDAPSPGEWKLVFHRDAAGRITGVTVGCWLARGVEYKRL</sequence>
<reference key="1">
    <citation type="journal article" date="2009" name="PLoS ONE">
        <title>Genome degradation in Brucella ovis corresponds with narrowing of its host range and tissue tropism.</title>
        <authorList>
            <person name="Tsolis R.M."/>
            <person name="Seshadri R."/>
            <person name="Santos R.L."/>
            <person name="Sangari F.J."/>
            <person name="Lobo J.M."/>
            <person name="de Jong M.F."/>
            <person name="Ren Q."/>
            <person name="Myers G."/>
            <person name="Brinkac L.M."/>
            <person name="Nelson W.C."/>
            <person name="Deboy R.T."/>
            <person name="Angiuoli S."/>
            <person name="Khouri H."/>
            <person name="Dimitrov G."/>
            <person name="Robinson J.R."/>
            <person name="Mulligan S."/>
            <person name="Walker R.L."/>
            <person name="Elzer P.E."/>
            <person name="Hassan K.A."/>
            <person name="Paulsen I.T."/>
        </authorList>
    </citation>
    <scope>NUCLEOTIDE SEQUENCE [LARGE SCALE GENOMIC DNA]</scope>
    <source>
        <strain>ATCC 25840 / 63/290 / NCTC 10512</strain>
    </source>
</reference>
<gene>
    <name evidence="1" type="primary">dap</name>
    <name type="ordered locus">BOV_A0889</name>
</gene>
<keyword id="KW-0031">Aminopeptidase</keyword>
<keyword id="KW-0378">Hydrolase</keyword>
<keyword id="KW-0645">Protease</keyword>
<dbReference type="EC" id="3.4.11.19" evidence="1"/>
<dbReference type="EMBL" id="CP000709">
    <property type="protein sequence ID" value="ABQ62502.1"/>
    <property type="molecule type" value="Genomic_DNA"/>
</dbReference>
<dbReference type="RefSeq" id="WP_006016489.1">
    <property type="nucleotide sequence ID" value="NC_009504.1"/>
</dbReference>
<dbReference type="SMR" id="A5VVL2"/>
<dbReference type="MEROPS" id="S12.002"/>
<dbReference type="GeneID" id="45126255"/>
<dbReference type="KEGG" id="bov:BOV_A0889"/>
<dbReference type="HOGENOM" id="CLU_020027_0_4_5"/>
<dbReference type="PhylomeDB" id="A5VVL2"/>
<dbReference type="Proteomes" id="UP000006383">
    <property type="component" value="Chromosome II"/>
</dbReference>
<dbReference type="GO" id="GO:0004177">
    <property type="term" value="F:aminopeptidase activity"/>
    <property type="evidence" value="ECO:0007669"/>
    <property type="project" value="UniProtKB-UniRule"/>
</dbReference>
<dbReference type="GO" id="GO:0006508">
    <property type="term" value="P:proteolysis"/>
    <property type="evidence" value="ECO:0007669"/>
    <property type="project" value="UniProtKB-KW"/>
</dbReference>
<dbReference type="Gene3D" id="2.40.128.50">
    <property type="match status" value="2"/>
</dbReference>
<dbReference type="Gene3D" id="3.40.710.10">
    <property type="entry name" value="DD-peptidase/beta-lactamase superfamily"/>
    <property type="match status" value="1"/>
</dbReference>
<dbReference type="HAMAP" id="MF_01960">
    <property type="entry name" value="D_aminopeptidase"/>
    <property type="match status" value="1"/>
</dbReference>
<dbReference type="InterPro" id="IPR050491">
    <property type="entry name" value="Bact_CellWall_Synth/Modif"/>
</dbReference>
<dbReference type="InterPro" id="IPR001466">
    <property type="entry name" value="Beta-lactam-related"/>
</dbReference>
<dbReference type="InterPro" id="IPR012338">
    <property type="entry name" value="Beta-lactam/transpept-like"/>
</dbReference>
<dbReference type="InterPro" id="IPR027279">
    <property type="entry name" value="D_amino_pept/lipop_sf"/>
</dbReference>
<dbReference type="InterPro" id="IPR023645">
    <property type="entry name" value="DAP"/>
</dbReference>
<dbReference type="InterPro" id="IPR012856">
    <property type="entry name" value="DAP_B_dom"/>
</dbReference>
<dbReference type="NCBIfam" id="NF009622">
    <property type="entry name" value="PRK13128.1"/>
    <property type="match status" value="1"/>
</dbReference>
<dbReference type="PANTHER" id="PTHR46825:SF9">
    <property type="entry name" value="BETA-LACTAMASE-RELATED DOMAIN-CONTAINING PROTEIN"/>
    <property type="match status" value="1"/>
</dbReference>
<dbReference type="PANTHER" id="PTHR46825">
    <property type="entry name" value="D-ALANYL-D-ALANINE-CARBOXYPEPTIDASE/ENDOPEPTIDASE AMPH"/>
    <property type="match status" value="1"/>
</dbReference>
<dbReference type="Pfam" id="PF00144">
    <property type="entry name" value="Beta-lactamase"/>
    <property type="match status" value="1"/>
</dbReference>
<dbReference type="Pfam" id="PF07930">
    <property type="entry name" value="DAP_B"/>
    <property type="match status" value="1"/>
</dbReference>
<dbReference type="SUPFAM" id="SSF56601">
    <property type="entry name" value="beta-lactamase/transpeptidase-like"/>
    <property type="match status" value="1"/>
</dbReference>
<dbReference type="SUPFAM" id="SSF50886">
    <property type="entry name" value="D-aminopeptidase, middle and C-terminal domains"/>
    <property type="match status" value="2"/>
</dbReference>
<proteinExistence type="inferred from homology"/>
<evidence type="ECO:0000255" key="1">
    <source>
        <dbReference type="HAMAP-Rule" id="MF_01960"/>
    </source>
</evidence>
<accession>A5VVL2</accession>
<organism>
    <name type="scientific">Brucella ovis (strain ATCC 25840 / 63/290 / NCTC 10512)</name>
    <dbReference type="NCBI Taxonomy" id="444178"/>
    <lineage>
        <taxon>Bacteria</taxon>
        <taxon>Pseudomonadati</taxon>
        <taxon>Pseudomonadota</taxon>
        <taxon>Alphaproteobacteria</taxon>
        <taxon>Hyphomicrobiales</taxon>
        <taxon>Brucellaceae</taxon>
        <taxon>Brucella/Ochrobactrum group</taxon>
        <taxon>Brucella</taxon>
    </lineage>
</organism>
<name>DAP_BRUO2</name>
<protein>
    <recommendedName>
        <fullName evidence="1">D-aminopeptidase</fullName>
        <ecNumber evidence="1">3.4.11.19</ecNumber>
    </recommendedName>
</protein>
<feature type="chain" id="PRO_1000070873" description="D-aminopeptidase">
    <location>
        <begin position="1"/>
        <end position="518"/>
    </location>
</feature>
<feature type="region of interest" description="Important for specificity" evidence="1">
    <location>
        <begin position="477"/>
        <end position="487"/>
    </location>
</feature>
<feature type="active site" description="Nucleophile" evidence="1">
    <location>
        <position position="62"/>
    </location>
</feature>
<feature type="active site" description="Proton donor/acceptor" evidence="1">
    <location>
        <position position="65"/>
    </location>
</feature>
<feature type="binding site" evidence="1">
    <location>
        <position position="481"/>
    </location>
    <ligand>
        <name>substrate</name>
    </ligand>
</feature>